<gene>
    <name type="ordered locus">Cag_0014</name>
</gene>
<feature type="chain" id="PRO_0000257518" description="Putative pre-16S rRNA nuclease">
    <location>
        <begin position="1"/>
        <end position="140"/>
    </location>
</feature>
<name>YQGF_CHLCH</name>
<reference key="1">
    <citation type="submission" date="2005-08" db="EMBL/GenBank/DDBJ databases">
        <title>Complete sequence of Chlorobium chlorochromatii CaD3.</title>
        <authorList>
            <consortium name="US DOE Joint Genome Institute"/>
            <person name="Copeland A."/>
            <person name="Lucas S."/>
            <person name="Lapidus A."/>
            <person name="Barry K."/>
            <person name="Detter J.C."/>
            <person name="Glavina T."/>
            <person name="Hammon N."/>
            <person name="Israni S."/>
            <person name="Pitluck S."/>
            <person name="Bryant D."/>
            <person name="Schmutz J."/>
            <person name="Larimer F."/>
            <person name="Land M."/>
            <person name="Kyrpides N."/>
            <person name="Ivanova N."/>
            <person name="Richardson P."/>
        </authorList>
    </citation>
    <scope>NUCLEOTIDE SEQUENCE [LARGE SCALE GENOMIC DNA]</scope>
    <source>
        <strain>CaD3</strain>
    </source>
</reference>
<dbReference type="EC" id="3.1.-.-" evidence="1"/>
<dbReference type="EMBL" id="CP000108">
    <property type="protein sequence ID" value="ABB27293.1"/>
    <property type="molecule type" value="Genomic_DNA"/>
</dbReference>
<dbReference type="SMR" id="Q3AUD8"/>
<dbReference type="STRING" id="340177.Cag_0014"/>
<dbReference type="KEGG" id="cch:Cag_0014"/>
<dbReference type="eggNOG" id="COG0816">
    <property type="taxonomic scope" value="Bacteria"/>
</dbReference>
<dbReference type="HOGENOM" id="CLU_098240_2_1_10"/>
<dbReference type="OrthoDB" id="9796140at2"/>
<dbReference type="GO" id="GO:0005829">
    <property type="term" value="C:cytosol"/>
    <property type="evidence" value="ECO:0007669"/>
    <property type="project" value="TreeGrafter"/>
</dbReference>
<dbReference type="GO" id="GO:0004518">
    <property type="term" value="F:nuclease activity"/>
    <property type="evidence" value="ECO:0007669"/>
    <property type="project" value="UniProtKB-KW"/>
</dbReference>
<dbReference type="GO" id="GO:0000967">
    <property type="term" value="P:rRNA 5'-end processing"/>
    <property type="evidence" value="ECO:0007669"/>
    <property type="project" value="UniProtKB-UniRule"/>
</dbReference>
<dbReference type="CDD" id="cd16964">
    <property type="entry name" value="YqgF"/>
    <property type="match status" value="1"/>
</dbReference>
<dbReference type="Gene3D" id="3.30.420.140">
    <property type="entry name" value="YqgF/RNase H-like domain"/>
    <property type="match status" value="1"/>
</dbReference>
<dbReference type="HAMAP" id="MF_00651">
    <property type="entry name" value="Nuclease_YqgF"/>
    <property type="match status" value="1"/>
</dbReference>
<dbReference type="InterPro" id="IPR012337">
    <property type="entry name" value="RNaseH-like_sf"/>
</dbReference>
<dbReference type="InterPro" id="IPR005227">
    <property type="entry name" value="YqgF"/>
</dbReference>
<dbReference type="InterPro" id="IPR006641">
    <property type="entry name" value="YqgF/RNaseH-like_dom"/>
</dbReference>
<dbReference type="InterPro" id="IPR037027">
    <property type="entry name" value="YqgF/RNaseH-like_dom_sf"/>
</dbReference>
<dbReference type="NCBIfam" id="TIGR00250">
    <property type="entry name" value="RNAse_H_YqgF"/>
    <property type="match status" value="1"/>
</dbReference>
<dbReference type="PANTHER" id="PTHR33317">
    <property type="entry name" value="POLYNUCLEOTIDYL TRANSFERASE, RIBONUCLEASE H-LIKE SUPERFAMILY PROTEIN"/>
    <property type="match status" value="1"/>
</dbReference>
<dbReference type="PANTHER" id="PTHR33317:SF4">
    <property type="entry name" value="POLYNUCLEOTIDYL TRANSFERASE, RIBONUCLEASE H-LIKE SUPERFAMILY PROTEIN"/>
    <property type="match status" value="1"/>
</dbReference>
<dbReference type="Pfam" id="PF03652">
    <property type="entry name" value="RuvX"/>
    <property type="match status" value="1"/>
</dbReference>
<dbReference type="SMART" id="SM00732">
    <property type="entry name" value="YqgFc"/>
    <property type="match status" value="1"/>
</dbReference>
<dbReference type="SUPFAM" id="SSF53098">
    <property type="entry name" value="Ribonuclease H-like"/>
    <property type="match status" value="1"/>
</dbReference>
<accession>Q3AUD8</accession>
<proteinExistence type="inferred from homology"/>
<evidence type="ECO:0000255" key="1">
    <source>
        <dbReference type="HAMAP-Rule" id="MF_00651"/>
    </source>
</evidence>
<comment type="function">
    <text evidence="1">Could be a nuclease involved in processing of the 5'-end of pre-16S rRNA.</text>
</comment>
<comment type="subcellular location">
    <subcellularLocation>
        <location evidence="1">Cytoplasm</location>
    </subcellularLocation>
</comment>
<comment type="similarity">
    <text evidence="1">Belongs to the YqgF nuclease family.</text>
</comment>
<sequence>MPLYQRIVAIDYGTKRIGVAKSDPLGMFAQPIGTVDRAGLSKLLSPMVEAGEVQLVVVGYPLNRHGEQTAMTEVIDRFIESLRLEFPALPIETINEHCSSKSAMQLLVASGTSRKERKTKGRLDTAAACLLLSDYLEQQK</sequence>
<organism>
    <name type="scientific">Chlorobium chlorochromatii (strain CaD3)</name>
    <dbReference type="NCBI Taxonomy" id="340177"/>
    <lineage>
        <taxon>Bacteria</taxon>
        <taxon>Pseudomonadati</taxon>
        <taxon>Chlorobiota</taxon>
        <taxon>Chlorobiia</taxon>
        <taxon>Chlorobiales</taxon>
        <taxon>Chlorobiaceae</taxon>
        <taxon>Chlorobium/Pelodictyon group</taxon>
        <taxon>Chlorobium</taxon>
    </lineage>
</organism>
<keyword id="KW-0963">Cytoplasm</keyword>
<keyword id="KW-0378">Hydrolase</keyword>
<keyword id="KW-0540">Nuclease</keyword>
<keyword id="KW-0690">Ribosome biogenesis</keyword>
<protein>
    <recommendedName>
        <fullName evidence="1">Putative pre-16S rRNA nuclease</fullName>
        <ecNumber evidence="1">3.1.-.-</ecNumber>
    </recommendedName>
</protein>